<evidence type="ECO:0000250" key="1">
    <source>
        <dbReference type="UniProtKB" id="Q8RXD5"/>
    </source>
</evidence>
<evidence type="ECO:0000269" key="2">
    <source ref="1"/>
</evidence>
<evidence type="ECO:0000303" key="3">
    <source ref="1"/>
</evidence>
<evidence type="ECO:0000305" key="4"/>
<comment type="function">
    <text evidence="1">Exhibits Kunitz trypsin protease inhibitor activity.</text>
</comment>
<comment type="similarity">
    <text evidence="4">Belongs to the protease inhibitor I3 (leguminous Kunitz-type inhibitor) family.</text>
</comment>
<name>KTI1_SELCO</name>
<organism>
    <name type="scientific">Selenicereus costaricensis</name>
    <name type="common">Red-fleshed dragon fruit</name>
    <name type="synonym">Cereus trigonus var. costaricensis</name>
    <dbReference type="NCBI Taxonomy" id="1125938"/>
    <lineage>
        <taxon>Eukaryota</taxon>
        <taxon>Viridiplantae</taxon>
        <taxon>Streptophyta</taxon>
        <taxon>Embryophyta</taxon>
        <taxon>Tracheophyta</taxon>
        <taxon>Spermatophyta</taxon>
        <taxon>Magnoliopsida</taxon>
        <taxon>eudicotyledons</taxon>
        <taxon>Gunneridae</taxon>
        <taxon>Pentapetalae</taxon>
        <taxon>Caryophyllales</taxon>
        <taxon>Cactineae</taxon>
        <taxon>Cactaceae</taxon>
        <taxon>Cactoideae</taxon>
        <taxon>Hylocereeae</taxon>
        <taxon>Selenicereus</taxon>
    </lineage>
</organism>
<accession>C0HM47</accession>
<keyword id="KW-0903">Direct protein sequencing</keyword>
<keyword id="KW-0646">Protease inhibitor</keyword>
<keyword id="KW-0722">Serine protease inhibitor</keyword>
<proteinExistence type="evidence at protein level"/>
<reference key="1">
    <citation type="submission" date="2022-06" db="UniProtKB">
        <title>Identification of a new allergen bound to IgE on seeds of Selenicereus costaricensis.</title>
        <authorList>
            <person name="Mengzhen H."/>
            <person name="Huilian C."/>
        </authorList>
    </citation>
    <scope>PROTEIN SEQUENCE</scope>
</reference>
<dbReference type="SMR" id="C0HM47"/>
<dbReference type="GO" id="GO:0004867">
    <property type="term" value="F:serine-type endopeptidase inhibitor activity"/>
    <property type="evidence" value="ECO:0007669"/>
    <property type="project" value="UniProtKB-KW"/>
</dbReference>
<dbReference type="InterPro" id="IPR002160">
    <property type="entry name" value="Prot_inh_Kunz-lg"/>
</dbReference>
<dbReference type="PROSITE" id="PS00283">
    <property type="entry name" value="SOYBEAN_KUNITZ"/>
    <property type="match status" value="1"/>
</dbReference>
<sequence>DTDSDLVLDVDGNPLEVGSEYYIGRAVGFYVVERFSSDVQIDSGLCRSDGFWRVSLDAYSPPTTTSSQQQRYLTVFRDRLSGLKLVGLTDDSDRVVL</sequence>
<feature type="chain" id="PRO_0000457724" description="Kunitz-type trypsin inhibitor 1">
    <location>
        <begin position="1" status="less than"/>
        <end position="97" status="greater than"/>
    </location>
</feature>
<feature type="non-consecutive residues" evidence="2">
    <location>
        <begin position="29"/>
        <end position="30"/>
    </location>
</feature>
<feature type="non-consecutive residues" evidence="2">
    <location>
        <begin position="35"/>
        <end position="36"/>
    </location>
</feature>
<feature type="non-consecutive residues" evidence="2">
    <location>
        <begin position="45"/>
        <end position="46"/>
    </location>
</feature>
<feature type="non-consecutive residues" evidence="2">
    <location>
        <begin position="59"/>
        <end position="60"/>
    </location>
</feature>
<feature type="non-terminal residue" evidence="2">
    <location>
        <position position="1"/>
    </location>
</feature>
<feature type="non-terminal residue" evidence="2">
    <location>
        <position position="97"/>
    </location>
</feature>
<protein>
    <recommendedName>
        <fullName evidence="3">Kunitz-type trypsin inhibitor 1</fullName>
    </recommendedName>
</protein>